<dbReference type="EC" id="3.3.2.1"/>
<dbReference type="EMBL" id="U32676">
    <property type="protein sequence ID" value="AAB18150.1"/>
    <property type="molecule type" value="Genomic_DNA"/>
</dbReference>
<dbReference type="EMBL" id="AE016796">
    <property type="protein sequence ID" value="AAO07761.1"/>
    <property type="molecule type" value="Genomic_DNA"/>
</dbReference>
<dbReference type="RefSeq" id="WP_011081755.1">
    <property type="nucleotide sequence ID" value="NC_004460.2"/>
</dbReference>
<dbReference type="SMR" id="P74965"/>
<dbReference type="KEGG" id="vvu:VV2_0838"/>
<dbReference type="HOGENOM" id="CLU_068979_2_0_6"/>
<dbReference type="UniPathway" id="UPA00021"/>
<dbReference type="Proteomes" id="UP000002275">
    <property type="component" value="Chromosome 2"/>
</dbReference>
<dbReference type="GO" id="GO:0008908">
    <property type="term" value="F:isochorismatase activity"/>
    <property type="evidence" value="ECO:0007669"/>
    <property type="project" value="UniProtKB-EC"/>
</dbReference>
<dbReference type="Gene3D" id="1.10.1200.10">
    <property type="entry name" value="ACP-like"/>
    <property type="match status" value="1"/>
</dbReference>
<dbReference type="Gene3D" id="3.40.50.850">
    <property type="entry name" value="Isochorismatase-like"/>
    <property type="match status" value="1"/>
</dbReference>
<dbReference type="InterPro" id="IPR036736">
    <property type="entry name" value="ACP-like_sf"/>
</dbReference>
<dbReference type="InterPro" id="IPR016291">
    <property type="entry name" value="Isochorismatase"/>
</dbReference>
<dbReference type="InterPro" id="IPR000868">
    <property type="entry name" value="Isochorismatase-like_dom"/>
</dbReference>
<dbReference type="InterPro" id="IPR050272">
    <property type="entry name" value="Isochorismatase-like_hydrls"/>
</dbReference>
<dbReference type="InterPro" id="IPR036380">
    <property type="entry name" value="Isochorismatase-like_sf"/>
</dbReference>
<dbReference type="InterPro" id="IPR009081">
    <property type="entry name" value="PP-bd_ACP"/>
</dbReference>
<dbReference type="PANTHER" id="PTHR43540:SF3">
    <property type="entry name" value="ENTEROBACTIN SYNTHASE COMPONENT B"/>
    <property type="match status" value="1"/>
</dbReference>
<dbReference type="PANTHER" id="PTHR43540">
    <property type="entry name" value="PEROXYUREIDOACRYLATE/UREIDOACRYLATE AMIDOHYDROLASE-RELATED"/>
    <property type="match status" value="1"/>
</dbReference>
<dbReference type="Pfam" id="PF00857">
    <property type="entry name" value="Isochorismatase"/>
    <property type="match status" value="1"/>
</dbReference>
<dbReference type="Pfam" id="PF00550">
    <property type="entry name" value="PP-binding"/>
    <property type="match status" value="1"/>
</dbReference>
<dbReference type="PIRSF" id="PIRSF001111">
    <property type="entry name" value="Isochorismatase"/>
    <property type="match status" value="1"/>
</dbReference>
<dbReference type="PRINTS" id="PR01398">
    <property type="entry name" value="ISCHRISMTASE"/>
</dbReference>
<dbReference type="SUPFAM" id="SSF47336">
    <property type="entry name" value="ACP-like"/>
    <property type="match status" value="1"/>
</dbReference>
<dbReference type="SUPFAM" id="SSF52499">
    <property type="entry name" value="Isochorismatase-like hydrolases"/>
    <property type="match status" value="1"/>
</dbReference>
<dbReference type="PROSITE" id="PS50075">
    <property type="entry name" value="CARRIER"/>
    <property type="match status" value="1"/>
</dbReference>
<sequence>MGIPKIAGYPLPTPAEFPDNRTGWTIDPDQAVLLIHDMQEYFVNYYQPDSSPVVDIIQHIQRLKAAAKKAGIPVIYTAQPANQHPTDRALLTDFWGPGLNGDHVPIVEALSPEEGDIEYVKWRYSAFKKTPLLEFMRAQGKSQLIISGIYGHIGILSTTLDAFMLDIQPFVIGDAIADFTREDHLRTLEYVASRSGSVKRLDEALDEIRSQKPLTLEQIQQDVATSLGIQPDEVDLDEDLMFVGLDSMRAMVLVEKWHQQGENISFGQLMEAASLREWWLVIEQARNEEQTMAVA</sequence>
<keyword id="KW-0378">Hydrolase</keyword>
<keyword id="KW-0596">Phosphopantetheine</keyword>
<keyword id="KW-0597">Phosphoprotein</keyword>
<organism>
    <name type="scientific">Vibrio vulnificus (strain CMCP6)</name>
    <dbReference type="NCBI Taxonomy" id="216895"/>
    <lineage>
        <taxon>Bacteria</taxon>
        <taxon>Pseudomonadati</taxon>
        <taxon>Pseudomonadota</taxon>
        <taxon>Gammaproteobacteria</taxon>
        <taxon>Vibrionales</taxon>
        <taxon>Vibrionaceae</taxon>
        <taxon>Vibrio</taxon>
    </lineage>
</organism>
<feature type="chain" id="PRO_0000201828" description="Probable isochorismatase">
    <location>
        <begin position="1"/>
        <end position="295"/>
    </location>
</feature>
<feature type="domain" description="Carrier" evidence="2">
    <location>
        <begin position="207"/>
        <end position="286"/>
    </location>
</feature>
<feature type="region of interest" description="Disordered" evidence="3">
    <location>
        <begin position="1"/>
        <end position="21"/>
    </location>
</feature>
<feature type="modified residue" description="O-(pantetheine 4'-phosphoryl)serine" evidence="2">
    <location>
        <position position="247"/>
    </location>
</feature>
<feature type="sequence conflict" description="In Ref. 1; AAB18150." evidence="4" ref="1">
    <original>G</original>
    <variation>D</variation>
    <location>
        <position position="115"/>
    </location>
</feature>
<feature type="sequence conflict" description="In Ref. 1; AAB18150." evidence="4" ref="1">
    <original>E</original>
    <variation>Q</variation>
    <location>
        <position position="189"/>
    </location>
</feature>
<reference key="1">
    <citation type="journal article" date="1996" name="Infect. Immun.">
        <title>Role of catechol siderophore synthesis in Vibrio vulnificus virulence.</title>
        <authorList>
            <person name="Litwin C.M."/>
            <person name="Rayback T.W."/>
            <person name="Skinner J."/>
        </authorList>
    </citation>
    <scope>NUCLEOTIDE SEQUENCE [GENOMIC DNA]</scope>
    <source>
        <strain>MO6-24</strain>
    </source>
</reference>
<reference key="2">
    <citation type="submission" date="2002-12" db="EMBL/GenBank/DDBJ databases">
        <title>Complete genome sequence of Vibrio vulnificus CMCP6.</title>
        <authorList>
            <person name="Rhee J.H."/>
            <person name="Kim S.Y."/>
            <person name="Chung S.S."/>
            <person name="Kim J.J."/>
            <person name="Moon Y.H."/>
            <person name="Jeong H."/>
            <person name="Choy H.E."/>
        </authorList>
    </citation>
    <scope>NUCLEOTIDE SEQUENCE [LARGE SCALE GENOMIC DNA]</scope>
    <source>
        <strain>CMCP6</strain>
    </source>
</reference>
<protein>
    <recommendedName>
        <fullName>Probable isochorismatase</fullName>
        <ecNumber>3.3.2.1</ecNumber>
    </recommendedName>
    <alternativeName>
        <fullName>2,3 dihydro-2,3 dihydroxybenzoate synthase</fullName>
    </alternativeName>
</protein>
<name>VENB_VIBVU</name>
<gene>
    <name type="primary">venB</name>
    <name type="ordered locus">VV2_0838</name>
</gene>
<accession>P74965</accession>
<comment type="function">
    <text>Involved in the biosynthesis of the catechol siderophore vulnibactin. Vulnibactin is a chelating compound involved in transporting iron from the bacterial environment into the cell cytoplasm.</text>
</comment>
<comment type="catalytic activity">
    <reaction>
        <text>isochorismate + H2O = (2S,3S)-2,3-dihydroxy-2,3-dihydrobenzoate + pyruvate</text>
        <dbReference type="Rhea" id="RHEA:11112"/>
        <dbReference type="ChEBI" id="CHEBI:15361"/>
        <dbReference type="ChEBI" id="CHEBI:15377"/>
        <dbReference type="ChEBI" id="CHEBI:29780"/>
        <dbReference type="ChEBI" id="CHEBI:58764"/>
        <dbReference type="EC" id="3.3.2.1"/>
    </reaction>
</comment>
<comment type="cofactor">
    <cofactor evidence="1">
        <name>pantetheine 4'-phosphate</name>
        <dbReference type="ChEBI" id="CHEBI:47942"/>
    </cofactor>
    <text evidence="1">Binds 1 phosphopantetheine covalently.</text>
</comment>
<comment type="pathway">
    <text>Siderophore biosynthesis; vulnibactin biosynthesis.</text>
</comment>
<comment type="similarity">
    <text evidence="4">Belongs to the isochorismatase family.</text>
</comment>
<proteinExistence type="inferred from homology"/>
<evidence type="ECO:0000250" key="1"/>
<evidence type="ECO:0000255" key="2">
    <source>
        <dbReference type="PROSITE-ProRule" id="PRU00258"/>
    </source>
</evidence>
<evidence type="ECO:0000256" key="3">
    <source>
        <dbReference type="SAM" id="MobiDB-lite"/>
    </source>
</evidence>
<evidence type="ECO:0000305" key="4"/>